<name>CRP1_MAIZE</name>
<evidence type="ECO:0000255" key="1"/>
<evidence type="ECO:0000255" key="2">
    <source>
        <dbReference type="PROSITE-ProRule" id="PRU00708"/>
    </source>
</evidence>
<evidence type="ECO:0000269" key="3">
    <source>
    </source>
</evidence>
<evidence type="ECO:0000269" key="4">
    <source>
    </source>
</evidence>
<evidence type="ECO:0000269" key="5">
    <source>
    </source>
</evidence>
<evidence type="ECO:0000269" key="6">
    <source>
    </source>
</evidence>
<evidence type="ECO:0000269" key="7">
    <source>
    </source>
</evidence>
<evidence type="ECO:0000303" key="8">
    <source>
    </source>
</evidence>
<evidence type="ECO:0000305" key="9"/>
<evidence type="ECO:0000312" key="10">
    <source>
        <dbReference type="EMBL" id="ONM58112.1"/>
    </source>
</evidence>
<keyword id="KW-0150">Chloroplast</keyword>
<keyword id="KW-0507">mRNA processing</keyword>
<keyword id="KW-0934">Plastid</keyword>
<keyword id="KW-1185">Reference proteome</keyword>
<keyword id="KW-0677">Repeat</keyword>
<keyword id="KW-0694">RNA-binding</keyword>
<keyword id="KW-0809">Transit peptide</keyword>
<keyword id="KW-0810">Translation regulation</keyword>
<organism>
    <name type="scientific">Zea mays</name>
    <name type="common">Maize</name>
    <dbReference type="NCBI Taxonomy" id="4577"/>
    <lineage>
        <taxon>Eukaryota</taxon>
        <taxon>Viridiplantae</taxon>
        <taxon>Streptophyta</taxon>
        <taxon>Embryophyta</taxon>
        <taxon>Tracheophyta</taxon>
        <taxon>Spermatophyta</taxon>
        <taxon>Magnoliopsida</taxon>
        <taxon>Liliopsida</taxon>
        <taxon>Poales</taxon>
        <taxon>Poaceae</taxon>
        <taxon>PACMAD clade</taxon>
        <taxon>Panicoideae</taxon>
        <taxon>Andropogonodae</taxon>
        <taxon>Andropogoneae</taxon>
        <taxon>Tripsacinae</taxon>
        <taxon>Zea</taxon>
    </lineage>
</organism>
<dbReference type="EMBL" id="AF073522">
    <property type="protein sequence ID" value="AAC25599.1"/>
    <property type="molecule type" value="mRNA"/>
</dbReference>
<dbReference type="EMBL" id="CM007650">
    <property type="protein sequence ID" value="ONM58112.1"/>
    <property type="molecule type" value="Genomic_DNA"/>
</dbReference>
<dbReference type="PIR" id="T01685">
    <property type="entry name" value="T01685"/>
</dbReference>
<dbReference type="RefSeq" id="NP_001105879.1">
    <property type="nucleotide sequence ID" value="NM_001112409.2"/>
</dbReference>
<dbReference type="SMR" id="A0A1D6IEG9"/>
<dbReference type="FunCoup" id="A0A1D6IEG9">
    <property type="interactions" value="660"/>
</dbReference>
<dbReference type="STRING" id="4577.A0A1D6IEG9"/>
<dbReference type="PaxDb" id="4577-GRMZM2G083950_P01"/>
<dbReference type="EnsemblPlants" id="Zm00001eb323580_T001">
    <property type="protein sequence ID" value="Zm00001eb323580_P001"/>
    <property type="gene ID" value="Zm00001eb323580"/>
</dbReference>
<dbReference type="EnsemblPlants" id="Zm00001eb323580_T003">
    <property type="protein sequence ID" value="Zm00001eb323580_P003"/>
    <property type="gene ID" value="Zm00001eb323580"/>
</dbReference>
<dbReference type="GeneID" id="732792"/>
<dbReference type="Gramene" id="Zm00001eb323580_T001">
    <property type="protein sequence ID" value="Zm00001eb323580_P001"/>
    <property type="gene ID" value="Zm00001eb323580"/>
</dbReference>
<dbReference type="Gramene" id="Zm00001eb323580_T003">
    <property type="protein sequence ID" value="Zm00001eb323580_P003"/>
    <property type="gene ID" value="Zm00001eb323580"/>
</dbReference>
<dbReference type="KEGG" id="zma:732792"/>
<dbReference type="eggNOG" id="KOG4197">
    <property type="taxonomic scope" value="Eukaryota"/>
</dbReference>
<dbReference type="InParanoid" id="A0A1D6IEG9"/>
<dbReference type="OMA" id="YHILMKY"/>
<dbReference type="OrthoDB" id="185373at2759"/>
<dbReference type="Proteomes" id="UP000007305">
    <property type="component" value="Chromosome 7"/>
</dbReference>
<dbReference type="ExpressionAtlas" id="A0A1D6IEG9">
    <property type="expression patterns" value="baseline and differential"/>
</dbReference>
<dbReference type="GO" id="GO:0009507">
    <property type="term" value="C:chloroplast"/>
    <property type="evidence" value="ECO:0000318"/>
    <property type="project" value="GO_Central"/>
</dbReference>
<dbReference type="GO" id="GO:0042644">
    <property type="term" value="C:chloroplast nucleoid"/>
    <property type="evidence" value="ECO:0007669"/>
    <property type="project" value="EnsemblPlants"/>
</dbReference>
<dbReference type="GO" id="GO:0009570">
    <property type="term" value="C:chloroplast stroma"/>
    <property type="evidence" value="ECO:0000314"/>
    <property type="project" value="UniProtKB"/>
</dbReference>
<dbReference type="GO" id="GO:0005737">
    <property type="term" value="C:cytoplasm"/>
    <property type="evidence" value="ECO:0000318"/>
    <property type="project" value="GO_Central"/>
</dbReference>
<dbReference type="GO" id="GO:0042651">
    <property type="term" value="C:thylakoid membrane"/>
    <property type="evidence" value="ECO:0007669"/>
    <property type="project" value="EnsemblPlants"/>
</dbReference>
<dbReference type="GO" id="GO:0003729">
    <property type="term" value="F:mRNA binding"/>
    <property type="evidence" value="ECO:0000314"/>
    <property type="project" value="UniProtKB"/>
</dbReference>
<dbReference type="GO" id="GO:0003727">
    <property type="term" value="F:single-stranded RNA binding"/>
    <property type="evidence" value="ECO:0007669"/>
    <property type="project" value="EnsemblPlants"/>
</dbReference>
<dbReference type="GO" id="GO:0010239">
    <property type="term" value="P:chloroplast mRNA processing"/>
    <property type="evidence" value="ECO:0007669"/>
    <property type="project" value="EnsemblPlants"/>
</dbReference>
<dbReference type="GO" id="GO:0009658">
    <property type="term" value="P:chloroplast organization"/>
    <property type="evidence" value="ECO:0007669"/>
    <property type="project" value="EnsemblPlants"/>
</dbReference>
<dbReference type="GO" id="GO:0006397">
    <property type="term" value="P:mRNA processing"/>
    <property type="evidence" value="ECO:0000318"/>
    <property type="project" value="GO_Central"/>
</dbReference>
<dbReference type="GO" id="GO:0045727">
    <property type="term" value="P:positive regulation of translation"/>
    <property type="evidence" value="ECO:0000315"/>
    <property type="project" value="UniProtKB"/>
</dbReference>
<dbReference type="FunFam" id="1.25.40.10:FF:001489">
    <property type="entry name" value="Pentatricopeptide repeat-containing protein CRP1, chloroplastic"/>
    <property type="match status" value="1"/>
</dbReference>
<dbReference type="FunFam" id="1.25.40.10:FF:000947">
    <property type="entry name" value="Pentatricopeptide repeat-containing protein, chloroplastic isoform A"/>
    <property type="match status" value="1"/>
</dbReference>
<dbReference type="FunFam" id="1.25.40.10:FF:001589">
    <property type="entry name" value="Pentatricopeptide repeat-containing protein, chloroplastic isoform A"/>
    <property type="match status" value="1"/>
</dbReference>
<dbReference type="FunFam" id="1.25.40.10:FF:001770">
    <property type="entry name" value="Pentatricopeptide repeat-containing protein, chloroplastic isoform A"/>
    <property type="match status" value="1"/>
</dbReference>
<dbReference type="Gene3D" id="1.25.40.10">
    <property type="entry name" value="Tetratricopeptide repeat domain"/>
    <property type="match status" value="5"/>
</dbReference>
<dbReference type="InterPro" id="IPR002885">
    <property type="entry name" value="Pentatricopeptide_rpt"/>
</dbReference>
<dbReference type="InterPro" id="IPR033443">
    <property type="entry name" value="PROP1-like_PPR_dom"/>
</dbReference>
<dbReference type="InterPro" id="IPR011990">
    <property type="entry name" value="TPR-like_helical_dom_sf"/>
</dbReference>
<dbReference type="NCBIfam" id="TIGR00756">
    <property type="entry name" value="PPR"/>
    <property type="match status" value="10"/>
</dbReference>
<dbReference type="PANTHER" id="PTHR47447">
    <property type="entry name" value="OS03G0856100 PROTEIN"/>
    <property type="match status" value="1"/>
</dbReference>
<dbReference type="PANTHER" id="PTHR47447:SF24">
    <property type="entry name" value="PENTATRICOPEPTIDE REPEAT-CONTAINING PROTEIN"/>
    <property type="match status" value="1"/>
</dbReference>
<dbReference type="Pfam" id="PF01535">
    <property type="entry name" value="PPR"/>
    <property type="match status" value="2"/>
</dbReference>
<dbReference type="Pfam" id="PF13041">
    <property type="entry name" value="PPR_2"/>
    <property type="match status" value="2"/>
</dbReference>
<dbReference type="Pfam" id="PF13812">
    <property type="entry name" value="PPR_3"/>
    <property type="match status" value="1"/>
</dbReference>
<dbReference type="Pfam" id="PF17177">
    <property type="entry name" value="PPR_long"/>
    <property type="match status" value="1"/>
</dbReference>
<dbReference type="PROSITE" id="PS51375">
    <property type="entry name" value="PPR"/>
    <property type="match status" value="14"/>
</dbReference>
<accession>A0A1D6IEG9</accession>
<accession>O81397</accession>
<comment type="function">
    <text evidence="4 5 6 7">Required for the translation of the chloroplast petA and petD mRNAs. Required for the processing of the petD mRNA from a polycistronic precursor (PubMed:8039510). Binds with high affinity to the 5'-UTR of the chloroplastic petA transcript (PubMed:18669444). Activates psaC and petA translation by binding their 5'-UTRs (PubMed:16141451, PubMed:23735295).</text>
</comment>
<comment type="subunit">
    <text evidence="3">Component of a multisubunit complex.</text>
</comment>
<comment type="subcellular location">
    <subcellularLocation>
        <location evidence="3">Plastid</location>
        <location evidence="3">Chloroplast stroma</location>
    </subcellularLocation>
</comment>
<comment type="disruption phenotype">
    <text evidence="7">Pale green leaf phenotype. Seedling lethality.</text>
</comment>
<comment type="similarity">
    <text evidence="9">Belongs to the PPR family. P subfamily.</text>
</comment>
<protein>
    <recommendedName>
        <fullName evidence="9">Pentatricopeptide repeat-containing protein CRP1, chloroplastic</fullName>
    </recommendedName>
    <alternativeName>
        <fullName evidence="8">Protein CHLOROPLAST RNA PROCESSING 1</fullName>
    </alternativeName>
</protein>
<sequence>MPASLLPPTFLPHHLRRLAPAGCTTSSVTSSSVSIPASRYDFEPLLAYLSSPSVSASLTSPSPPASVPAPEHRLAASYSAVPSHEWHALLRDLAASDASLPLAFALLPFLHRHRLCFPLDLLLSSLLHSLSVSGRLLPHSLLLSFPPSLSDPPSPLLLNSLLAASAAASRPAVALRLLSLLREHDFLPDLASYSHLLASLLNTRDPPDAALLERLLGDLRESRLEPDAPLFSDLISAFARAALPDAALELLASAQAIGLTPRSNAVTALISALGTAGRVAEAEALFLEFFLAGEIKPRTRAYNALLKGYVRIASLKNAEQVLDEMSQCGVAPDEATYSLLVDAYTRAGRWESARILLKEMEADGVKPSSYVFSRILAGFRDRGDWQKAFAVLREMQASGVRPDRHFYNVMIDTFGKYNCLGHAMDAFNKMREEGIEPDVVTWNTLIDAHCKGGRHDRAAELFEEMRESNCPPGTTTYNIMINLLGEQEHWEGVEAMLSEMKEQGLVPNIITYTTLVDVYGRSGRYKEAIDCIEAMKADGLKPSPTMYHALVNAYAQRGLADHALNVVKAMKADGLEVSILVLNSLINAFGEDRRVVEAFSVLQFMRENGLRPDVITYTTLMKALIRVEQFDKVPVIYEEMITSGCAPDRKARAMLRSGLKYIKHMRVA</sequence>
<gene>
    <name evidence="8" type="primary">CRP1</name>
    <name evidence="10" type="ORF">ZEAMMB73_Zm00001d021716</name>
</gene>
<proteinExistence type="evidence at protein level"/>
<reference key="1">
    <citation type="journal article" date="1999" name="EMBO J.">
        <title>Molecular cloning of the maize gene crp1 reveals similarity between regulators of mitochondrial and chloroplast gene expression.</title>
        <authorList>
            <person name="Fisk D.G."/>
            <person name="Walker M.B."/>
            <person name="Barkan A."/>
        </authorList>
    </citation>
    <scope>NUCLEOTIDE SEQUENCE [MRNA]</scope>
    <scope>FUNCTION</scope>
    <scope>SUBUNIT</scope>
    <scope>SUBCELLULAR LOCATION</scope>
</reference>
<reference key="2">
    <citation type="journal article" date="2009" name="Science">
        <title>The B73 maize genome: complexity, diversity, and dynamics.</title>
        <authorList>
            <person name="Schnable P.S."/>
            <person name="Ware D."/>
            <person name="Fulton R.S."/>
            <person name="Stein J.C."/>
            <person name="Wei F."/>
            <person name="Pasternak S."/>
            <person name="Liang C."/>
            <person name="Zhang J."/>
            <person name="Fulton L."/>
            <person name="Graves T.A."/>
            <person name="Minx P."/>
            <person name="Reily A.D."/>
            <person name="Courtney L."/>
            <person name="Kruchowski S.S."/>
            <person name="Tomlinson C."/>
            <person name="Strong C."/>
            <person name="Delehaunty K."/>
            <person name="Fronick C."/>
            <person name="Courtney B."/>
            <person name="Rock S.M."/>
            <person name="Belter E."/>
            <person name="Du F."/>
            <person name="Kim K."/>
            <person name="Abbott R.M."/>
            <person name="Cotton M."/>
            <person name="Levy A."/>
            <person name="Marchetto P."/>
            <person name="Ochoa K."/>
            <person name="Jackson S.M."/>
            <person name="Gillam B."/>
            <person name="Chen W."/>
            <person name="Yan L."/>
            <person name="Higginbotham J."/>
            <person name="Cardenas M."/>
            <person name="Waligorski J."/>
            <person name="Applebaum E."/>
            <person name="Phelps L."/>
            <person name="Falcone J."/>
            <person name="Kanchi K."/>
            <person name="Thane T."/>
            <person name="Scimone A."/>
            <person name="Thane N."/>
            <person name="Henke J."/>
            <person name="Wang T."/>
            <person name="Ruppert J."/>
            <person name="Shah N."/>
            <person name="Rotter K."/>
            <person name="Hodges J."/>
            <person name="Ingenthron E."/>
            <person name="Cordes M."/>
            <person name="Kohlberg S."/>
            <person name="Sgro J."/>
            <person name="Delgado B."/>
            <person name="Mead K."/>
            <person name="Chinwalla A."/>
            <person name="Leonard S."/>
            <person name="Crouse K."/>
            <person name="Collura K."/>
            <person name="Kudrna D."/>
            <person name="Currie J."/>
            <person name="He R."/>
            <person name="Angelova A."/>
            <person name="Rajasekar S."/>
            <person name="Mueller T."/>
            <person name="Lomeli R."/>
            <person name="Scara G."/>
            <person name="Ko A."/>
            <person name="Delaney K."/>
            <person name="Wissotski M."/>
            <person name="Lopez G."/>
            <person name="Campos D."/>
            <person name="Braidotti M."/>
            <person name="Ashley E."/>
            <person name="Golser W."/>
            <person name="Kim H."/>
            <person name="Lee S."/>
            <person name="Lin J."/>
            <person name="Dujmic Z."/>
            <person name="Kim W."/>
            <person name="Talag J."/>
            <person name="Zuccolo A."/>
            <person name="Fan C."/>
            <person name="Sebastian A."/>
            <person name="Kramer M."/>
            <person name="Spiegel L."/>
            <person name="Nascimento L."/>
            <person name="Zutavern T."/>
            <person name="Miller B."/>
            <person name="Ambroise C."/>
            <person name="Muller S."/>
            <person name="Spooner W."/>
            <person name="Narechania A."/>
            <person name="Ren L."/>
            <person name="Wei S."/>
            <person name="Kumari S."/>
            <person name="Faga B."/>
            <person name="Levy M.J."/>
            <person name="McMahan L."/>
            <person name="Van Buren P."/>
            <person name="Vaughn M.W."/>
            <person name="Ying K."/>
            <person name="Yeh C.-T."/>
            <person name="Emrich S.J."/>
            <person name="Jia Y."/>
            <person name="Kalyanaraman A."/>
            <person name="Hsia A.-P."/>
            <person name="Barbazuk W.B."/>
            <person name="Baucom R.S."/>
            <person name="Brutnell T.P."/>
            <person name="Carpita N.C."/>
            <person name="Chaparro C."/>
            <person name="Chia J.-M."/>
            <person name="Deragon J.-M."/>
            <person name="Estill J.C."/>
            <person name="Fu Y."/>
            <person name="Jeddeloh J.A."/>
            <person name="Han Y."/>
            <person name="Lee H."/>
            <person name="Li P."/>
            <person name="Lisch D.R."/>
            <person name="Liu S."/>
            <person name="Liu Z."/>
            <person name="Nagel D.H."/>
            <person name="McCann M.C."/>
            <person name="SanMiguel P."/>
            <person name="Myers A.M."/>
            <person name="Nettleton D."/>
            <person name="Nguyen J."/>
            <person name="Penning B.W."/>
            <person name="Ponnala L."/>
            <person name="Schneider K.L."/>
            <person name="Schwartz D.C."/>
            <person name="Sharma A."/>
            <person name="Soderlund C."/>
            <person name="Springer N.M."/>
            <person name="Sun Q."/>
            <person name="Wang H."/>
            <person name="Waterman M."/>
            <person name="Westerman R."/>
            <person name="Wolfgruber T.K."/>
            <person name="Yang L."/>
            <person name="Yu Y."/>
            <person name="Zhang L."/>
            <person name="Zhou S."/>
            <person name="Zhu Q."/>
            <person name="Bennetzen J.L."/>
            <person name="Dawe R.K."/>
            <person name="Jiang J."/>
            <person name="Jiang N."/>
            <person name="Presting G.G."/>
            <person name="Wessler S.R."/>
            <person name="Aluru S."/>
            <person name="Martienssen R.A."/>
            <person name="Clifton S.W."/>
            <person name="McCombie W.R."/>
            <person name="Wing R.A."/>
            <person name="Wilson R.K."/>
        </authorList>
    </citation>
    <scope>NUCLEOTIDE SEQUENCE [LARGE SCALE GENOMIC DNA]</scope>
    <source>
        <strain>cv. B73</strain>
    </source>
</reference>
<reference key="3">
    <citation type="journal article" date="1994" name="EMBO J.">
        <title>A nuclear mutation in maize blocks the processing and translation of several chloroplast mRNAs and provides evidence for the differential translation of alternative mRNA forms.</title>
        <authorList>
            <person name="Barkan A."/>
            <person name="Walker M."/>
            <person name="Nolasco M."/>
            <person name="Johnson D."/>
        </authorList>
    </citation>
    <scope>FUNCTION</scope>
    <scope>DISRUPTION PHENOTYPE</scope>
</reference>
<reference key="4">
    <citation type="journal article" date="2005" name="Plant Cell">
        <title>RNA immunoprecipitation and microarray analysis show a chloroplast pentatricopeptide repeat protein to be associated with the 5' region of mRNAs whose translation it activates.</title>
        <authorList>
            <person name="Schmitz-Linneweber C."/>
            <person name="Williams-Carrier R."/>
            <person name="Barkan A."/>
        </authorList>
    </citation>
    <scope>FUNCTION</scope>
</reference>
<reference key="5">
    <citation type="journal article" date="2008" name="RNA">
        <title>Sequence-specific binding of a chloroplast pentatricopeptide repeat protein to its native group II intron ligand.</title>
        <authorList>
            <person name="Williams-Carrier R."/>
            <person name="Kroeger T."/>
            <person name="Barkan A."/>
        </authorList>
    </citation>
    <scope>FUNCTION</scope>
</reference>
<reference key="6">
    <citation type="journal article" date="2013" name="Plant Cell">
        <title>A rapid ribosome profiling method elucidates chloroplast ribosome behavior in vivo.</title>
        <authorList>
            <person name="Zoschke R."/>
            <person name="Watkins K.P."/>
            <person name="Barkan A."/>
        </authorList>
    </citation>
    <scope>FUNCTION</scope>
</reference>
<feature type="transit peptide" description="Chloroplast" evidence="1">
    <location>
        <begin position="1"/>
        <end position="64"/>
    </location>
</feature>
<feature type="chain" id="PRO_0000441906" description="Pentatricopeptide repeat-containing protein CRP1, chloroplastic">
    <location>
        <begin position="65"/>
        <end position="668"/>
    </location>
</feature>
<feature type="repeat" description="PPR 1" evidence="2">
    <location>
        <begin position="154"/>
        <end position="188"/>
    </location>
</feature>
<feature type="repeat" description="PPR 2" evidence="2">
    <location>
        <begin position="189"/>
        <end position="226"/>
    </location>
</feature>
<feature type="repeat" description="PPR 3" evidence="2">
    <location>
        <begin position="227"/>
        <end position="261"/>
    </location>
</feature>
<feature type="repeat" description="PPR 4" evidence="2">
    <location>
        <begin position="262"/>
        <end position="297"/>
    </location>
</feature>
<feature type="repeat" description="PPR 5" evidence="2">
    <location>
        <begin position="298"/>
        <end position="332"/>
    </location>
</feature>
<feature type="repeat" description="PPR 6" evidence="2">
    <location>
        <begin position="333"/>
        <end position="367"/>
    </location>
</feature>
<feature type="repeat" description="PPR 7" evidence="2">
    <location>
        <begin position="368"/>
        <end position="402"/>
    </location>
</feature>
<feature type="repeat" description="PPR 8" evidence="2">
    <location>
        <begin position="403"/>
        <end position="437"/>
    </location>
</feature>
<feature type="repeat" description="PPR 9" evidence="2">
    <location>
        <begin position="438"/>
        <end position="472"/>
    </location>
</feature>
<feature type="repeat" description="PPR 10" evidence="2">
    <location>
        <begin position="473"/>
        <end position="507"/>
    </location>
</feature>
<feature type="repeat" description="PPR 11" evidence="2">
    <location>
        <begin position="508"/>
        <end position="542"/>
    </location>
</feature>
<feature type="repeat" description="PPR 12" evidence="2">
    <location>
        <begin position="543"/>
        <end position="577"/>
    </location>
</feature>
<feature type="repeat" description="PPR 13" evidence="2">
    <location>
        <begin position="578"/>
        <end position="612"/>
    </location>
</feature>
<feature type="repeat" description="PPR 14" evidence="2">
    <location>
        <begin position="613"/>
        <end position="647"/>
    </location>
</feature>
<feature type="sequence conflict" description="In Ref. 1; AAC25599." evidence="9" ref="1">
    <original>A</original>
    <variation>V</variation>
    <location>
        <position position="98"/>
    </location>
</feature>
<feature type="sequence conflict" description="In Ref. 1; AAC25599." evidence="9" ref="1">
    <original>A</original>
    <variation>G</variation>
    <location>
        <position position="313"/>
    </location>
</feature>